<proteinExistence type="inferred from homology"/>
<protein>
    <recommendedName>
        <fullName evidence="1">Methionine--tRNA ligase</fullName>
        <ecNumber evidence="1">6.1.1.10</ecNumber>
    </recommendedName>
    <alternativeName>
        <fullName evidence="1">Methionyl-tRNA synthetase</fullName>
        <shortName evidence="1">MetRS</shortName>
    </alternativeName>
</protein>
<reference key="1">
    <citation type="journal article" date="2001" name="Nature">
        <title>Massive gene decay in the leprosy bacillus.</title>
        <authorList>
            <person name="Cole S.T."/>
            <person name="Eiglmeier K."/>
            <person name="Parkhill J."/>
            <person name="James K.D."/>
            <person name="Thomson N.R."/>
            <person name="Wheeler P.R."/>
            <person name="Honore N."/>
            <person name="Garnier T."/>
            <person name="Churcher C.M."/>
            <person name="Harris D.E."/>
            <person name="Mungall K.L."/>
            <person name="Basham D."/>
            <person name="Brown D."/>
            <person name="Chillingworth T."/>
            <person name="Connor R."/>
            <person name="Davies R.M."/>
            <person name="Devlin K."/>
            <person name="Duthoy S."/>
            <person name="Feltwell T."/>
            <person name="Fraser A."/>
            <person name="Hamlin N."/>
            <person name="Holroyd S."/>
            <person name="Hornsby T."/>
            <person name="Jagels K."/>
            <person name="Lacroix C."/>
            <person name="Maclean J."/>
            <person name="Moule S."/>
            <person name="Murphy L.D."/>
            <person name="Oliver K."/>
            <person name="Quail M.A."/>
            <person name="Rajandream M.A."/>
            <person name="Rutherford K.M."/>
            <person name="Rutter S."/>
            <person name="Seeger K."/>
            <person name="Simon S."/>
            <person name="Simmonds M."/>
            <person name="Skelton J."/>
            <person name="Squares R."/>
            <person name="Squares S."/>
            <person name="Stevens K."/>
            <person name="Taylor K."/>
            <person name="Whitehead S."/>
            <person name="Woodward J.R."/>
            <person name="Barrell B.G."/>
        </authorList>
    </citation>
    <scope>NUCLEOTIDE SEQUENCE [LARGE SCALE GENOMIC DNA]</scope>
    <source>
        <strain>TN</strain>
    </source>
</reference>
<name>SYM_MYCLE</name>
<comment type="function">
    <text evidence="1">Is required not only for elongation of protein synthesis but also for the initiation of all mRNA translation through initiator tRNA(fMet) aminoacylation.</text>
</comment>
<comment type="catalytic activity">
    <reaction evidence="1">
        <text>tRNA(Met) + L-methionine + ATP = L-methionyl-tRNA(Met) + AMP + diphosphate</text>
        <dbReference type="Rhea" id="RHEA:13481"/>
        <dbReference type="Rhea" id="RHEA-COMP:9667"/>
        <dbReference type="Rhea" id="RHEA-COMP:9698"/>
        <dbReference type="ChEBI" id="CHEBI:30616"/>
        <dbReference type="ChEBI" id="CHEBI:33019"/>
        <dbReference type="ChEBI" id="CHEBI:57844"/>
        <dbReference type="ChEBI" id="CHEBI:78442"/>
        <dbReference type="ChEBI" id="CHEBI:78530"/>
        <dbReference type="ChEBI" id="CHEBI:456215"/>
        <dbReference type="EC" id="6.1.1.10"/>
    </reaction>
</comment>
<comment type="subunit">
    <text evidence="1">Monomer.</text>
</comment>
<comment type="subcellular location">
    <subcellularLocation>
        <location evidence="1">Cytoplasm</location>
    </subcellularLocation>
</comment>
<comment type="similarity">
    <text evidence="1">Belongs to the class-I aminoacyl-tRNA synthetase family. MetG type 2B subfamily.</text>
</comment>
<evidence type="ECO:0000255" key="1">
    <source>
        <dbReference type="HAMAP-Rule" id="MF_01228"/>
    </source>
</evidence>
<evidence type="ECO:0000256" key="2">
    <source>
        <dbReference type="SAM" id="MobiDB-lite"/>
    </source>
</evidence>
<gene>
    <name evidence="1" type="primary">metG</name>
    <name type="synonym">metS</name>
    <name type="ordered locus">ML0238</name>
</gene>
<sequence length="537" mass="60448">MRPYYITTAIAYPNAAPHIGHAYEYIATDAIARFKRLDGLDVRFLTGTDEHGLKVAQAAEAAGVPTAQLARRNSGVFQRMQEALHISFDRFIRTTDADHYKAAKEIWRRMDAAGDIYLGTYSGWYSVRDERFFVDSETKLLDNGIRVAVETGTLVTWTEKEQTYFFRLSAYVDKLLAHYDANPDFIGPEVRRNEVISFVSGGLEDFSISRTSFDWGVQVPEHPDHVMYVWIDALTNYLTGAGFPDTDSELFGRYWPANLHMIGKDIIRFHAVYWPAFLMSAGIELPRRIFAHGFLHNHGEKMSKSVGNIVDPMALVQTFGVDQVRYFLLREIPFGQDGNYSEEAIITRMNTDLANEFGNLAQRSLSMVAKNLGGVVPEPSEFTSADTALLTTADGLLERVRGNFDGQAMNLALEAIWLMLGEANKYFSSQQPWILRKSESEADQARFRTVLYTTCEVVRIAALLVQPVMPESAGKMLDLLGQEEDQRAFTAVSVRLAPGTVLPPPTGVFPRYQPSEIEGADPVKSSSKRREHNKRRE</sequence>
<organism>
    <name type="scientific">Mycobacterium leprae (strain TN)</name>
    <dbReference type="NCBI Taxonomy" id="272631"/>
    <lineage>
        <taxon>Bacteria</taxon>
        <taxon>Bacillati</taxon>
        <taxon>Actinomycetota</taxon>
        <taxon>Actinomycetes</taxon>
        <taxon>Mycobacteriales</taxon>
        <taxon>Mycobacteriaceae</taxon>
        <taxon>Mycobacterium</taxon>
    </lineage>
</organism>
<accession>Q9CD55</accession>
<feature type="chain" id="PRO_0000139232" description="Methionine--tRNA ligase">
    <location>
        <begin position="1"/>
        <end position="537"/>
    </location>
</feature>
<feature type="region of interest" description="Disordered" evidence="2">
    <location>
        <begin position="503"/>
        <end position="537"/>
    </location>
</feature>
<feature type="short sequence motif" description="'HIGH' region">
    <location>
        <begin position="11"/>
        <end position="21"/>
    </location>
</feature>
<feature type="short sequence motif" description="'KMSKS' region">
    <location>
        <begin position="301"/>
        <end position="305"/>
    </location>
</feature>
<feature type="compositionally biased region" description="Basic residues" evidence="2">
    <location>
        <begin position="526"/>
        <end position="537"/>
    </location>
</feature>
<feature type="binding site" evidence="1">
    <location>
        <position position="304"/>
    </location>
    <ligand>
        <name>ATP</name>
        <dbReference type="ChEBI" id="CHEBI:30616"/>
    </ligand>
</feature>
<dbReference type="EC" id="6.1.1.10" evidence="1"/>
<dbReference type="EMBL" id="AL583917">
    <property type="protein sequence ID" value="CAC29746.1"/>
    <property type="molecule type" value="Genomic_DNA"/>
</dbReference>
<dbReference type="PIR" id="F86938">
    <property type="entry name" value="F86938"/>
</dbReference>
<dbReference type="RefSeq" id="NP_301297.1">
    <property type="nucleotide sequence ID" value="NC_002677.1"/>
</dbReference>
<dbReference type="RefSeq" id="WP_010907621.1">
    <property type="nucleotide sequence ID" value="NC_002677.1"/>
</dbReference>
<dbReference type="SMR" id="Q9CD55"/>
<dbReference type="STRING" id="272631.gene:17574055"/>
<dbReference type="KEGG" id="mle:ML0238"/>
<dbReference type="PATRIC" id="fig|272631.5.peg.372"/>
<dbReference type="Leproma" id="ML0238"/>
<dbReference type="eggNOG" id="COG0143">
    <property type="taxonomic scope" value="Bacteria"/>
</dbReference>
<dbReference type="HOGENOM" id="CLU_009710_9_4_11"/>
<dbReference type="OrthoDB" id="9810191at2"/>
<dbReference type="Proteomes" id="UP000000806">
    <property type="component" value="Chromosome"/>
</dbReference>
<dbReference type="GO" id="GO:0005737">
    <property type="term" value="C:cytoplasm"/>
    <property type="evidence" value="ECO:0007669"/>
    <property type="project" value="UniProtKB-SubCell"/>
</dbReference>
<dbReference type="GO" id="GO:0005524">
    <property type="term" value="F:ATP binding"/>
    <property type="evidence" value="ECO:0007669"/>
    <property type="project" value="UniProtKB-UniRule"/>
</dbReference>
<dbReference type="GO" id="GO:0004825">
    <property type="term" value="F:methionine-tRNA ligase activity"/>
    <property type="evidence" value="ECO:0007669"/>
    <property type="project" value="UniProtKB-UniRule"/>
</dbReference>
<dbReference type="GO" id="GO:0006431">
    <property type="term" value="P:methionyl-tRNA aminoacylation"/>
    <property type="evidence" value="ECO:0007669"/>
    <property type="project" value="UniProtKB-UniRule"/>
</dbReference>
<dbReference type="CDD" id="cd07957">
    <property type="entry name" value="Anticodon_Ia_Met"/>
    <property type="match status" value="1"/>
</dbReference>
<dbReference type="CDD" id="cd00814">
    <property type="entry name" value="MetRS_core"/>
    <property type="match status" value="1"/>
</dbReference>
<dbReference type="FunFam" id="2.170.220.10:FF:000002">
    <property type="entry name" value="Methionine--tRNA ligase"/>
    <property type="match status" value="1"/>
</dbReference>
<dbReference type="Gene3D" id="2.170.220.10">
    <property type="match status" value="1"/>
</dbReference>
<dbReference type="Gene3D" id="3.40.50.620">
    <property type="entry name" value="HUPs"/>
    <property type="match status" value="1"/>
</dbReference>
<dbReference type="Gene3D" id="1.10.730.10">
    <property type="entry name" value="Isoleucyl-tRNA Synthetase, Domain 1"/>
    <property type="match status" value="1"/>
</dbReference>
<dbReference type="HAMAP" id="MF_01228">
    <property type="entry name" value="Met_tRNA_synth_type2"/>
    <property type="match status" value="1"/>
</dbReference>
<dbReference type="InterPro" id="IPR001412">
    <property type="entry name" value="aa-tRNA-synth_I_CS"/>
</dbReference>
<dbReference type="InterPro" id="IPR041872">
    <property type="entry name" value="Anticodon_Met"/>
</dbReference>
<dbReference type="InterPro" id="IPR014758">
    <property type="entry name" value="Met-tRNA_synth"/>
</dbReference>
<dbReference type="InterPro" id="IPR023457">
    <property type="entry name" value="Met-tRNA_synth_2"/>
</dbReference>
<dbReference type="InterPro" id="IPR015413">
    <property type="entry name" value="Methionyl/Leucyl_tRNA_Synth"/>
</dbReference>
<dbReference type="InterPro" id="IPR033911">
    <property type="entry name" value="MetRS_core"/>
</dbReference>
<dbReference type="InterPro" id="IPR014729">
    <property type="entry name" value="Rossmann-like_a/b/a_fold"/>
</dbReference>
<dbReference type="InterPro" id="IPR009080">
    <property type="entry name" value="tRNAsynth_Ia_anticodon-bd"/>
</dbReference>
<dbReference type="NCBIfam" id="TIGR00398">
    <property type="entry name" value="metG"/>
    <property type="match status" value="1"/>
</dbReference>
<dbReference type="NCBIfam" id="NF008900">
    <property type="entry name" value="PRK12267.1"/>
    <property type="match status" value="1"/>
</dbReference>
<dbReference type="PANTHER" id="PTHR43326:SF1">
    <property type="entry name" value="METHIONINE--TRNA LIGASE, MITOCHONDRIAL"/>
    <property type="match status" value="1"/>
</dbReference>
<dbReference type="PANTHER" id="PTHR43326">
    <property type="entry name" value="METHIONYL-TRNA SYNTHETASE"/>
    <property type="match status" value="1"/>
</dbReference>
<dbReference type="Pfam" id="PF19303">
    <property type="entry name" value="Anticodon_3"/>
    <property type="match status" value="1"/>
</dbReference>
<dbReference type="Pfam" id="PF09334">
    <property type="entry name" value="tRNA-synt_1g"/>
    <property type="match status" value="1"/>
</dbReference>
<dbReference type="PRINTS" id="PR01041">
    <property type="entry name" value="TRNASYNTHMET"/>
</dbReference>
<dbReference type="SUPFAM" id="SSF47323">
    <property type="entry name" value="Anticodon-binding domain of a subclass of class I aminoacyl-tRNA synthetases"/>
    <property type="match status" value="1"/>
</dbReference>
<dbReference type="SUPFAM" id="SSF52374">
    <property type="entry name" value="Nucleotidylyl transferase"/>
    <property type="match status" value="1"/>
</dbReference>
<dbReference type="PROSITE" id="PS00178">
    <property type="entry name" value="AA_TRNA_LIGASE_I"/>
    <property type="match status" value="1"/>
</dbReference>
<keyword id="KW-0030">Aminoacyl-tRNA synthetase</keyword>
<keyword id="KW-0067">ATP-binding</keyword>
<keyword id="KW-0963">Cytoplasm</keyword>
<keyword id="KW-0436">Ligase</keyword>
<keyword id="KW-0547">Nucleotide-binding</keyword>
<keyword id="KW-0648">Protein biosynthesis</keyword>
<keyword id="KW-1185">Reference proteome</keyword>